<dbReference type="EMBL" id="AE009948">
    <property type="protein sequence ID" value="AAM98966.1"/>
    <property type="molecule type" value="Genomic_DNA"/>
</dbReference>
<dbReference type="RefSeq" id="NP_687094.1">
    <property type="nucleotide sequence ID" value="NC_004116.1"/>
</dbReference>
<dbReference type="RefSeq" id="WP_000160205.1">
    <property type="nucleotide sequence ID" value="NC_004116.1"/>
</dbReference>
<dbReference type="SMR" id="Q8E2D1"/>
<dbReference type="STRING" id="208435.SAG0058"/>
<dbReference type="GeneID" id="66885018"/>
<dbReference type="KEGG" id="sag:SAG0058"/>
<dbReference type="PATRIC" id="fig|208435.3.peg.57"/>
<dbReference type="HOGENOM" id="CLU_044142_4_1_9"/>
<dbReference type="OrthoDB" id="9806135at2"/>
<dbReference type="Proteomes" id="UP000000821">
    <property type="component" value="Chromosome"/>
</dbReference>
<dbReference type="GO" id="GO:0022625">
    <property type="term" value="C:cytosolic large ribosomal subunit"/>
    <property type="evidence" value="ECO:0007669"/>
    <property type="project" value="TreeGrafter"/>
</dbReference>
<dbReference type="GO" id="GO:0019843">
    <property type="term" value="F:rRNA binding"/>
    <property type="evidence" value="ECO:0007669"/>
    <property type="project" value="UniProtKB-UniRule"/>
</dbReference>
<dbReference type="GO" id="GO:0003735">
    <property type="term" value="F:structural constituent of ribosome"/>
    <property type="evidence" value="ECO:0007669"/>
    <property type="project" value="InterPro"/>
</dbReference>
<dbReference type="GO" id="GO:0006412">
    <property type="term" value="P:translation"/>
    <property type="evidence" value="ECO:0007669"/>
    <property type="project" value="UniProtKB-UniRule"/>
</dbReference>
<dbReference type="FunFam" id="2.40.30.10:FF:000004">
    <property type="entry name" value="50S ribosomal protein L3"/>
    <property type="match status" value="1"/>
</dbReference>
<dbReference type="FunFam" id="3.30.160.810:FF:000002">
    <property type="entry name" value="50S ribosomal protein L3"/>
    <property type="match status" value="1"/>
</dbReference>
<dbReference type="Gene3D" id="3.30.160.810">
    <property type="match status" value="1"/>
</dbReference>
<dbReference type="Gene3D" id="2.40.30.10">
    <property type="entry name" value="Translation factors"/>
    <property type="match status" value="1"/>
</dbReference>
<dbReference type="HAMAP" id="MF_01325_B">
    <property type="entry name" value="Ribosomal_uL3_B"/>
    <property type="match status" value="1"/>
</dbReference>
<dbReference type="InterPro" id="IPR000597">
    <property type="entry name" value="Ribosomal_uL3"/>
</dbReference>
<dbReference type="InterPro" id="IPR019927">
    <property type="entry name" value="Ribosomal_uL3_bac/org-type"/>
</dbReference>
<dbReference type="InterPro" id="IPR019926">
    <property type="entry name" value="Ribosomal_uL3_CS"/>
</dbReference>
<dbReference type="InterPro" id="IPR009000">
    <property type="entry name" value="Transl_B-barrel_sf"/>
</dbReference>
<dbReference type="NCBIfam" id="TIGR03625">
    <property type="entry name" value="L3_bact"/>
    <property type="match status" value="1"/>
</dbReference>
<dbReference type="PANTHER" id="PTHR11229">
    <property type="entry name" value="50S RIBOSOMAL PROTEIN L3"/>
    <property type="match status" value="1"/>
</dbReference>
<dbReference type="PANTHER" id="PTHR11229:SF16">
    <property type="entry name" value="LARGE RIBOSOMAL SUBUNIT PROTEIN UL3C"/>
    <property type="match status" value="1"/>
</dbReference>
<dbReference type="Pfam" id="PF00297">
    <property type="entry name" value="Ribosomal_L3"/>
    <property type="match status" value="1"/>
</dbReference>
<dbReference type="SUPFAM" id="SSF50447">
    <property type="entry name" value="Translation proteins"/>
    <property type="match status" value="1"/>
</dbReference>
<dbReference type="PROSITE" id="PS00474">
    <property type="entry name" value="RIBOSOMAL_L3"/>
    <property type="match status" value="1"/>
</dbReference>
<feature type="chain" id="PRO_0000077164" description="Large ribosomal subunit protein uL3">
    <location>
        <begin position="1"/>
        <end position="208"/>
    </location>
</feature>
<feature type="region of interest" description="Disordered" evidence="2">
    <location>
        <begin position="116"/>
        <end position="148"/>
    </location>
</feature>
<gene>
    <name evidence="1" type="primary">rplC</name>
    <name type="ordered locus">SAG0058</name>
</gene>
<accession>Q8E2D1</accession>
<sequence length="208" mass="22426">MTKGILGKKVGMTQIFTESGEFIPVTVIEATPNVVLQVKTVETDGYEAVQVGFDDKREVLSNKPAKGHVAKANTAPKRFIREFKNIEGLEVGAELSVEQFEAGDVVDVTGTSKGKGFQGVIKRHGQSRGPMAHGSRYHRRPGSMGPVAPNRVFKNKRLAGRMGGNRVTVQNLEIVQVIPEKNVVLIKGNVPGAKKSLITIKSAVKAAK</sequence>
<reference key="1">
    <citation type="journal article" date="2002" name="Proc. Natl. Acad. Sci. U.S.A.">
        <title>Complete genome sequence and comparative genomic analysis of an emerging human pathogen, serotype V Streptococcus agalactiae.</title>
        <authorList>
            <person name="Tettelin H."/>
            <person name="Masignani V."/>
            <person name="Cieslewicz M.J."/>
            <person name="Eisen J.A."/>
            <person name="Peterson S.N."/>
            <person name="Wessels M.R."/>
            <person name="Paulsen I.T."/>
            <person name="Nelson K.E."/>
            <person name="Margarit I."/>
            <person name="Read T.D."/>
            <person name="Madoff L.C."/>
            <person name="Wolf A.M."/>
            <person name="Beanan M.J."/>
            <person name="Brinkac L.M."/>
            <person name="Daugherty S.C."/>
            <person name="DeBoy R.T."/>
            <person name="Durkin A.S."/>
            <person name="Kolonay J.F."/>
            <person name="Madupu R."/>
            <person name="Lewis M.R."/>
            <person name="Radune D."/>
            <person name="Fedorova N.B."/>
            <person name="Scanlan D."/>
            <person name="Khouri H.M."/>
            <person name="Mulligan S."/>
            <person name="Carty H.A."/>
            <person name="Cline R.T."/>
            <person name="Van Aken S.E."/>
            <person name="Gill J."/>
            <person name="Scarselli M."/>
            <person name="Mora M."/>
            <person name="Iacobini E.T."/>
            <person name="Brettoni C."/>
            <person name="Galli G."/>
            <person name="Mariani M."/>
            <person name="Vegni F."/>
            <person name="Maione D."/>
            <person name="Rinaudo D."/>
            <person name="Rappuoli R."/>
            <person name="Telford J.L."/>
            <person name="Kasper D.L."/>
            <person name="Grandi G."/>
            <person name="Fraser C.M."/>
        </authorList>
    </citation>
    <scope>NUCLEOTIDE SEQUENCE [LARGE SCALE GENOMIC DNA]</scope>
    <source>
        <strain>ATCC BAA-611 / 2603 V/R</strain>
    </source>
</reference>
<protein>
    <recommendedName>
        <fullName evidence="1">Large ribosomal subunit protein uL3</fullName>
    </recommendedName>
    <alternativeName>
        <fullName evidence="3">50S ribosomal protein L3</fullName>
    </alternativeName>
</protein>
<evidence type="ECO:0000255" key="1">
    <source>
        <dbReference type="HAMAP-Rule" id="MF_01325"/>
    </source>
</evidence>
<evidence type="ECO:0000256" key="2">
    <source>
        <dbReference type="SAM" id="MobiDB-lite"/>
    </source>
</evidence>
<evidence type="ECO:0000305" key="3"/>
<organism>
    <name type="scientific">Streptococcus agalactiae serotype V (strain ATCC BAA-611 / 2603 V/R)</name>
    <dbReference type="NCBI Taxonomy" id="208435"/>
    <lineage>
        <taxon>Bacteria</taxon>
        <taxon>Bacillati</taxon>
        <taxon>Bacillota</taxon>
        <taxon>Bacilli</taxon>
        <taxon>Lactobacillales</taxon>
        <taxon>Streptococcaceae</taxon>
        <taxon>Streptococcus</taxon>
    </lineage>
</organism>
<name>RL3_STRA5</name>
<keyword id="KW-1185">Reference proteome</keyword>
<keyword id="KW-0687">Ribonucleoprotein</keyword>
<keyword id="KW-0689">Ribosomal protein</keyword>
<keyword id="KW-0694">RNA-binding</keyword>
<keyword id="KW-0699">rRNA-binding</keyword>
<comment type="function">
    <text evidence="1">One of the primary rRNA binding proteins, it binds directly near the 3'-end of the 23S rRNA, where it nucleates assembly of the 50S subunit.</text>
</comment>
<comment type="subunit">
    <text evidence="1">Part of the 50S ribosomal subunit. Forms a cluster with proteins L14 and L19.</text>
</comment>
<comment type="similarity">
    <text evidence="1">Belongs to the universal ribosomal protein uL3 family.</text>
</comment>
<proteinExistence type="inferred from homology"/>